<accession>Q47MV7</accession>
<reference key="1">
    <citation type="journal article" date="2007" name="J. Bacteriol.">
        <title>Genome sequence and analysis of the soil cellulolytic actinomycete Thermobifida fusca YX.</title>
        <authorList>
            <person name="Lykidis A."/>
            <person name="Mavromatis K."/>
            <person name="Ivanova N."/>
            <person name="Anderson I."/>
            <person name="Land M."/>
            <person name="DiBartolo G."/>
            <person name="Martinez M."/>
            <person name="Lapidus A."/>
            <person name="Lucas S."/>
            <person name="Copeland A."/>
            <person name="Richardson P."/>
            <person name="Wilson D.B."/>
            <person name="Kyrpides N."/>
        </authorList>
    </citation>
    <scope>NUCLEOTIDE SEQUENCE [LARGE SCALE GENOMIC DNA]</scope>
    <source>
        <strain>YX</strain>
    </source>
</reference>
<feature type="chain" id="PRO_0000230070" description="Glutamate 5-kinase">
    <location>
        <begin position="1"/>
        <end position="388"/>
    </location>
</feature>
<feature type="domain" description="PUA" evidence="1">
    <location>
        <begin position="285"/>
        <end position="363"/>
    </location>
</feature>
<feature type="binding site" evidence="1">
    <location>
        <position position="21"/>
    </location>
    <ligand>
        <name>ATP</name>
        <dbReference type="ChEBI" id="CHEBI:30616"/>
    </ligand>
</feature>
<feature type="binding site" evidence="1">
    <location>
        <position position="61"/>
    </location>
    <ligand>
        <name>substrate</name>
    </ligand>
</feature>
<feature type="binding site" evidence="1">
    <location>
        <position position="148"/>
    </location>
    <ligand>
        <name>substrate</name>
    </ligand>
</feature>
<feature type="binding site" evidence="1">
    <location>
        <position position="160"/>
    </location>
    <ligand>
        <name>substrate</name>
    </ligand>
</feature>
<feature type="binding site" evidence="1">
    <location>
        <begin position="180"/>
        <end position="181"/>
    </location>
    <ligand>
        <name>ATP</name>
        <dbReference type="ChEBI" id="CHEBI:30616"/>
    </ligand>
</feature>
<feature type="binding site" evidence="1">
    <location>
        <begin position="222"/>
        <end position="228"/>
    </location>
    <ligand>
        <name>ATP</name>
        <dbReference type="ChEBI" id="CHEBI:30616"/>
    </ligand>
</feature>
<name>PROB_THEFY</name>
<organism>
    <name type="scientific">Thermobifida fusca (strain YX)</name>
    <dbReference type="NCBI Taxonomy" id="269800"/>
    <lineage>
        <taxon>Bacteria</taxon>
        <taxon>Bacillati</taxon>
        <taxon>Actinomycetota</taxon>
        <taxon>Actinomycetes</taxon>
        <taxon>Streptosporangiales</taxon>
        <taxon>Nocardiopsidaceae</taxon>
        <taxon>Thermobifida</taxon>
    </lineage>
</organism>
<sequence length="388" mass="41121">MGTGVGQTRAEIAQARRVVVKVGSSSLTTPQGGLDHERIRDLTDVLAERRKAGTEVVLVSSGAVAAGMAPLGLTQRPRDLATQQAAASVGQGLLLARYTAEFARHSLTAAQILLTADDLMRRAQYRNAQRAMSRLLEIGAVPIVNENDTVATHEIRFGDNDRLAALVAHLLRADVLVLLTDVDALYDGNPSLPTSTRITQVNGPEDLVGVDLGSANKRGVGTGGMITKVESARIATEAGVATVLTSAANARAALRGDPVGTFFVPAKHRRPSSRQLWLAHATAGRGSVFLDPGAVHAVVTEKASLLPAGVIKVEGDFNAGDPVDLRDENGVLVARGLVNYDSAEIPDLMGRSTRWLARELGAEYSREIVHRDDLVVLRNGSTSDREAC</sequence>
<comment type="function">
    <text evidence="1">Catalyzes the transfer of a phosphate group to glutamate to form L-glutamate 5-phosphate.</text>
</comment>
<comment type="catalytic activity">
    <reaction evidence="1">
        <text>L-glutamate + ATP = L-glutamyl 5-phosphate + ADP</text>
        <dbReference type="Rhea" id="RHEA:14877"/>
        <dbReference type="ChEBI" id="CHEBI:29985"/>
        <dbReference type="ChEBI" id="CHEBI:30616"/>
        <dbReference type="ChEBI" id="CHEBI:58274"/>
        <dbReference type="ChEBI" id="CHEBI:456216"/>
        <dbReference type="EC" id="2.7.2.11"/>
    </reaction>
</comment>
<comment type="pathway">
    <text evidence="1">Amino-acid biosynthesis; L-proline biosynthesis; L-glutamate 5-semialdehyde from L-glutamate: step 1/2.</text>
</comment>
<comment type="subcellular location">
    <subcellularLocation>
        <location evidence="1">Cytoplasm</location>
    </subcellularLocation>
</comment>
<comment type="similarity">
    <text evidence="1">Belongs to the glutamate 5-kinase family.</text>
</comment>
<evidence type="ECO:0000255" key="1">
    <source>
        <dbReference type="HAMAP-Rule" id="MF_00456"/>
    </source>
</evidence>
<keyword id="KW-0028">Amino-acid biosynthesis</keyword>
<keyword id="KW-0067">ATP-binding</keyword>
<keyword id="KW-0963">Cytoplasm</keyword>
<keyword id="KW-0418">Kinase</keyword>
<keyword id="KW-0547">Nucleotide-binding</keyword>
<keyword id="KW-0641">Proline biosynthesis</keyword>
<keyword id="KW-0808">Transferase</keyword>
<protein>
    <recommendedName>
        <fullName evidence="1">Glutamate 5-kinase</fullName>
        <ecNumber evidence="1">2.7.2.11</ecNumber>
    </recommendedName>
    <alternativeName>
        <fullName evidence="1">Gamma-glutamyl kinase</fullName>
        <shortName evidence="1">GK</shortName>
    </alternativeName>
</protein>
<dbReference type="EC" id="2.7.2.11" evidence="1"/>
<dbReference type="EMBL" id="CP000088">
    <property type="protein sequence ID" value="AAZ56212.1"/>
    <property type="molecule type" value="Genomic_DNA"/>
</dbReference>
<dbReference type="RefSeq" id="WP_011292602.1">
    <property type="nucleotide sequence ID" value="NC_007333.1"/>
</dbReference>
<dbReference type="SMR" id="Q47MV7"/>
<dbReference type="STRING" id="269800.Tfu_2179"/>
<dbReference type="KEGG" id="tfu:Tfu_2179"/>
<dbReference type="eggNOG" id="COG0263">
    <property type="taxonomic scope" value="Bacteria"/>
</dbReference>
<dbReference type="HOGENOM" id="CLU_025400_2_0_11"/>
<dbReference type="OrthoDB" id="9804434at2"/>
<dbReference type="UniPathway" id="UPA00098">
    <property type="reaction ID" value="UER00359"/>
</dbReference>
<dbReference type="GO" id="GO:0005829">
    <property type="term" value="C:cytosol"/>
    <property type="evidence" value="ECO:0007669"/>
    <property type="project" value="TreeGrafter"/>
</dbReference>
<dbReference type="GO" id="GO:0005524">
    <property type="term" value="F:ATP binding"/>
    <property type="evidence" value="ECO:0007669"/>
    <property type="project" value="UniProtKB-KW"/>
</dbReference>
<dbReference type="GO" id="GO:0004349">
    <property type="term" value="F:glutamate 5-kinase activity"/>
    <property type="evidence" value="ECO:0007669"/>
    <property type="project" value="UniProtKB-UniRule"/>
</dbReference>
<dbReference type="GO" id="GO:0003723">
    <property type="term" value="F:RNA binding"/>
    <property type="evidence" value="ECO:0007669"/>
    <property type="project" value="InterPro"/>
</dbReference>
<dbReference type="GO" id="GO:0055129">
    <property type="term" value="P:L-proline biosynthetic process"/>
    <property type="evidence" value="ECO:0007669"/>
    <property type="project" value="UniProtKB-UniRule"/>
</dbReference>
<dbReference type="CDD" id="cd04242">
    <property type="entry name" value="AAK_G5K_ProB"/>
    <property type="match status" value="1"/>
</dbReference>
<dbReference type="CDD" id="cd21157">
    <property type="entry name" value="PUA_G5K"/>
    <property type="match status" value="1"/>
</dbReference>
<dbReference type="FunFam" id="3.40.1160.10:FF:000018">
    <property type="entry name" value="Glutamate 5-kinase"/>
    <property type="match status" value="1"/>
</dbReference>
<dbReference type="Gene3D" id="3.40.1160.10">
    <property type="entry name" value="Acetylglutamate kinase-like"/>
    <property type="match status" value="2"/>
</dbReference>
<dbReference type="Gene3D" id="2.30.130.10">
    <property type="entry name" value="PUA domain"/>
    <property type="match status" value="1"/>
</dbReference>
<dbReference type="HAMAP" id="MF_00456">
    <property type="entry name" value="ProB"/>
    <property type="match status" value="1"/>
</dbReference>
<dbReference type="InterPro" id="IPR036393">
    <property type="entry name" value="AceGlu_kinase-like_sf"/>
</dbReference>
<dbReference type="InterPro" id="IPR001048">
    <property type="entry name" value="Asp/Glu/Uridylate_kinase"/>
</dbReference>
<dbReference type="InterPro" id="IPR041739">
    <property type="entry name" value="G5K_ProB"/>
</dbReference>
<dbReference type="InterPro" id="IPR001057">
    <property type="entry name" value="Glu/AcGlu_kinase"/>
</dbReference>
<dbReference type="InterPro" id="IPR011529">
    <property type="entry name" value="Glu_5kinase"/>
</dbReference>
<dbReference type="InterPro" id="IPR005715">
    <property type="entry name" value="Glu_5kinase/COase_Synthase"/>
</dbReference>
<dbReference type="InterPro" id="IPR002478">
    <property type="entry name" value="PUA"/>
</dbReference>
<dbReference type="InterPro" id="IPR015947">
    <property type="entry name" value="PUA-like_sf"/>
</dbReference>
<dbReference type="InterPro" id="IPR036974">
    <property type="entry name" value="PUA_sf"/>
</dbReference>
<dbReference type="NCBIfam" id="TIGR01027">
    <property type="entry name" value="proB"/>
    <property type="match status" value="1"/>
</dbReference>
<dbReference type="PANTHER" id="PTHR43654">
    <property type="entry name" value="GLUTAMATE 5-KINASE"/>
    <property type="match status" value="1"/>
</dbReference>
<dbReference type="PANTHER" id="PTHR43654:SF1">
    <property type="entry name" value="ISOPENTENYL PHOSPHATE KINASE"/>
    <property type="match status" value="1"/>
</dbReference>
<dbReference type="Pfam" id="PF00696">
    <property type="entry name" value="AA_kinase"/>
    <property type="match status" value="1"/>
</dbReference>
<dbReference type="Pfam" id="PF01472">
    <property type="entry name" value="PUA"/>
    <property type="match status" value="1"/>
</dbReference>
<dbReference type="PIRSF" id="PIRSF000729">
    <property type="entry name" value="GK"/>
    <property type="match status" value="1"/>
</dbReference>
<dbReference type="PRINTS" id="PR00474">
    <property type="entry name" value="GLU5KINASE"/>
</dbReference>
<dbReference type="SMART" id="SM00359">
    <property type="entry name" value="PUA"/>
    <property type="match status" value="1"/>
</dbReference>
<dbReference type="SUPFAM" id="SSF53633">
    <property type="entry name" value="Carbamate kinase-like"/>
    <property type="match status" value="1"/>
</dbReference>
<dbReference type="SUPFAM" id="SSF88697">
    <property type="entry name" value="PUA domain-like"/>
    <property type="match status" value="1"/>
</dbReference>
<dbReference type="PROSITE" id="PS50890">
    <property type="entry name" value="PUA"/>
    <property type="match status" value="1"/>
</dbReference>
<proteinExistence type="inferred from homology"/>
<gene>
    <name evidence="1" type="primary">proB</name>
    <name type="ordered locus">Tfu_2179</name>
</gene>